<organism>
    <name type="scientific">Zea mays</name>
    <name type="common">Maize</name>
    <dbReference type="NCBI Taxonomy" id="4577"/>
    <lineage>
        <taxon>Eukaryota</taxon>
        <taxon>Viridiplantae</taxon>
        <taxon>Streptophyta</taxon>
        <taxon>Embryophyta</taxon>
        <taxon>Tracheophyta</taxon>
        <taxon>Spermatophyta</taxon>
        <taxon>Magnoliopsida</taxon>
        <taxon>Liliopsida</taxon>
        <taxon>Poales</taxon>
        <taxon>Poaceae</taxon>
        <taxon>PACMAD clade</taxon>
        <taxon>Panicoideae</taxon>
        <taxon>Andropogonodae</taxon>
        <taxon>Andropogoneae</taxon>
        <taxon>Tripsacinae</taxon>
        <taxon>Zea</taxon>
    </lineage>
</organism>
<protein>
    <recommendedName>
        <fullName>Transketolase, chloroplastic</fullName>
        <shortName>TK</shortName>
        <ecNumber>2.2.1.1</ecNumber>
    </recommendedName>
</protein>
<evidence type="ECO:0000250" key="1"/>
<evidence type="ECO:0000269" key="2">
    <source>
    </source>
</evidence>
<evidence type="ECO:0000305" key="3"/>
<evidence type="ECO:0000312" key="4">
    <source>
        <dbReference type="PDB" id="1ITZ"/>
    </source>
</evidence>
<evidence type="ECO:0007829" key="5">
    <source>
        <dbReference type="PDB" id="1ITZ"/>
    </source>
</evidence>
<dbReference type="EC" id="2.2.1.1"/>
<dbReference type="EMBL" id="AY148193">
    <property type="protein sequence ID" value="AAN65341.1"/>
    <property type="status" value="ALT_INIT"/>
    <property type="molecule type" value="Other_DNA"/>
</dbReference>
<dbReference type="PDB" id="1ITZ">
    <property type="method" value="X-ray"/>
    <property type="resolution" value="2.30 A"/>
    <property type="chains" value="A/B/C=1-675"/>
</dbReference>
<dbReference type="PDB" id="8CI0">
    <property type="method" value="X-ray"/>
    <property type="resolution" value="1.90 A"/>
    <property type="chains" value="AAA/BBB/CCC=1-675"/>
</dbReference>
<dbReference type="PDBsum" id="1ITZ"/>
<dbReference type="PDBsum" id="8CI0"/>
<dbReference type="SMR" id="Q7SIC9"/>
<dbReference type="FunCoup" id="Q7SIC9">
    <property type="interactions" value="2326"/>
</dbReference>
<dbReference type="STRING" id="4577.Q7SIC9"/>
<dbReference type="PaxDb" id="4577-GRMZM2G033208_P01"/>
<dbReference type="MaizeGDB" id="320183"/>
<dbReference type="eggNOG" id="KOG0523">
    <property type="taxonomic scope" value="Eukaryota"/>
</dbReference>
<dbReference type="InParanoid" id="Q7SIC9"/>
<dbReference type="SABIO-RK" id="Q7SIC9"/>
<dbReference type="UniPathway" id="UPA00116"/>
<dbReference type="EvolutionaryTrace" id="Q7SIC9"/>
<dbReference type="Proteomes" id="UP000007305">
    <property type="component" value="Unplaced"/>
</dbReference>
<dbReference type="ExpressionAtlas" id="Q7SIC9">
    <property type="expression patterns" value="baseline and differential"/>
</dbReference>
<dbReference type="GO" id="GO:0009535">
    <property type="term" value="C:chloroplast thylakoid membrane"/>
    <property type="evidence" value="ECO:0007669"/>
    <property type="project" value="UniProtKB-SubCell"/>
</dbReference>
<dbReference type="GO" id="GO:0005829">
    <property type="term" value="C:cytosol"/>
    <property type="evidence" value="ECO:0000318"/>
    <property type="project" value="GO_Central"/>
</dbReference>
<dbReference type="GO" id="GO:0005509">
    <property type="term" value="F:calcium ion binding"/>
    <property type="evidence" value="ECO:0000304"/>
    <property type="project" value="AgBase"/>
</dbReference>
<dbReference type="GO" id="GO:0050897">
    <property type="term" value="F:cobalt ion binding"/>
    <property type="evidence" value="ECO:0000304"/>
    <property type="project" value="AgBase"/>
</dbReference>
<dbReference type="GO" id="GO:0030145">
    <property type="term" value="F:manganese ion binding"/>
    <property type="evidence" value="ECO:0000304"/>
    <property type="project" value="AgBase"/>
</dbReference>
<dbReference type="GO" id="GO:0004802">
    <property type="term" value="F:transketolase activity"/>
    <property type="evidence" value="ECO:0000314"/>
    <property type="project" value="AgBase"/>
</dbReference>
<dbReference type="GO" id="GO:0006098">
    <property type="term" value="P:pentose-phosphate shunt"/>
    <property type="evidence" value="ECO:0000318"/>
    <property type="project" value="GO_Central"/>
</dbReference>
<dbReference type="GO" id="GO:0019253">
    <property type="term" value="P:reductive pentose-phosphate cycle"/>
    <property type="evidence" value="ECO:0007669"/>
    <property type="project" value="UniProtKB-UniPathway"/>
</dbReference>
<dbReference type="CDD" id="cd07033">
    <property type="entry name" value="TPP_PYR_DXS_TK_like"/>
    <property type="match status" value="1"/>
</dbReference>
<dbReference type="CDD" id="cd02012">
    <property type="entry name" value="TPP_TK"/>
    <property type="match status" value="1"/>
</dbReference>
<dbReference type="FunFam" id="3.40.50.920:FF:000003">
    <property type="entry name" value="Transketolase"/>
    <property type="match status" value="1"/>
</dbReference>
<dbReference type="FunFam" id="3.40.50.970:FF:000003">
    <property type="entry name" value="Transketolase"/>
    <property type="match status" value="1"/>
</dbReference>
<dbReference type="FunFam" id="3.40.50.970:FF:000004">
    <property type="entry name" value="Transketolase"/>
    <property type="match status" value="1"/>
</dbReference>
<dbReference type="Gene3D" id="3.40.50.920">
    <property type="match status" value="1"/>
</dbReference>
<dbReference type="Gene3D" id="3.40.50.970">
    <property type="match status" value="2"/>
</dbReference>
<dbReference type="InterPro" id="IPR029061">
    <property type="entry name" value="THDP-binding"/>
</dbReference>
<dbReference type="InterPro" id="IPR009014">
    <property type="entry name" value="Transketo_C/PFOR_II"/>
</dbReference>
<dbReference type="InterPro" id="IPR055152">
    <property type="entry name" value="Transketolase-like_C_2"/>
</dbReference>
<dbReference type="InterPro" id="IPR005475">
    <property type="entry name" value="Transketolase-like_Pyr-bd"/>
</dbReference>
<dbReference type="InterPro" id="IPR005478">
    <property type="entry name" value="Transketolase_bac-like"/>
</dbReference>
<dbReference type="InterPro" id="IPR049557">
    <property type="entry name" value="Transketolase_CS"/>
</dbReference>
<dbReference type="InterPro" id="IPR033247">
    <property type="entry name" value="Transketolase_fam"/>
</dbReference>
<dbReference type="InterPro" id="IPR005474">
    <property type="entry name" value="Transketolase_N"/>
</dbReference>
<dbReference type="NCBIfam" id="TIGR00232">
    <property type="entry name" value="tktlase_bact"/>
    <property type="match status" value="1"/>
</dbReference>
<dbReference type="PANTHER" id="PTHR43522">
    <property type="entry name" value="TRANSKETOLASE"/>
    <property type="match status" value="1"/>
</dbReference>
<dbReference type="PANTHER" id="PTHR43522:SF2">
    <property type="entry name" value="TRANSKETOLASE 1-RELATED"/>
    <property type="match status" value="1"/>
</dbReference>
<dbReference type="Pfam" id="PF02779">
    <property type="entry name" value="Transket_pyr"/>
    <property type="match status" value="1"/>
</dbReference>
<dbReference type="Pfam" id="PF22613">
    <property type="entry name" value="Transketolase_C_1"/>
    <property type="match status" value="1"/>
</dbReference>
<dbReference type="Pfam" id="PF00456">
    <property type="entry name" value="Transketolase_N"/>
    <property type="match status" value="1"/>
</dbReference>
<dbReference type="SMART" id="SM00861">
    <property type="entry name" value="Transket_pyr"/>
    <property type="match status" value="1"/>
</dbReference>
<dbReference type="SUPFAM" id="SSF52518">
    <property type="entry name" value="Thiamin diphosphate-binding fold (THDP-binding)"/>
    <property type="match status" value="2"/>
</dbReference>
<dbReference type="SUPFAM" id="SSF52922">
    <property type="entry name" value="TK C-terminal domain-like"/>
    <property type="match status" value="1"/>
</dbReference>
<dbReference type="PROSITE" id="PS00801">
    <property type="entry name" value="TRANSKETOLASE_1"/>
    <property type="match status" value="1"/>
</dbReference>
<feature type="chain" id="PRO_0000232420" description="Transketolase, chloroplastic">
    <location>
        <begin position="1"/>
        <end position="675"/>
    </location>
</feature>
<feature type="active site" description="Proton donor" evidence="1">
    <location>
        <position position="423"/>
    </location>
</feature>
<feature type="binding site" evidence="2">
    <location>
        <position position="78"/>
    </location>
    <ligand>
        <name>thiamine diphosphate</name>
        <dbReference type="ChEBI" id="CHEBI:58937"/>
    </ligand>
</feature>
<feature type="binding site" evidence="2">
    <location>
        <begin position="127"/>
        <end position="129"/>
    </location>
    <ligand>
        <name>thiamine diphosphate</name>
        <dbReference type="ChEBI" id="CHEBI:58937"/>
    </ligand>
</feature>
<feature type="binding site" evidence="2">
    <location>
        <position position="168"/>
    </location>
    <ligand>
        <name>Mg(2+)</name>
        <dbReference type="ChEBI" id="CHEBI:18420"/>
    </ligand>
</feature>
<feature type="binding site" evidence="1">
    <location>
        <position position="169"/>
    </location>
    <ligand>
        <name>thiamine diphosphate</name>
        <dbReference type="ChEBI" id="CHEBI:58937"/>
    </ligand>
</feature>
<feature type="binding site" evidence="2">
    <location>
        <position position="173"/>
    </location>
    <ligand>
        <name>thiamine diphosphate</name>
        <dbReference type="ChEBI" id="CHEBI:58937"/>
    </ligand>
</feature>
<feature type="binding site" evidence="2">
    <location>
        <position position="198"/>
    </location>
    <ligand>
        <name>Mg(2+)</name>
        <dbReference type="ChEBI" id="CHEBI:18420"/>
    </ligand>
</feature>
<feature type="binding site" evidence="1">
    <location>
        <position position="198"/>
    </location>
    <ligand>
        <name>thiamine diphosphate</name>
        <dbReference type="ChEBI" id="CHEBI:58937"/>
    </ligand>
</feature>
<feature type="binding site">
    <location>
        <position position="200"/>
    </location>
    <ligand>
        <name>Mg(2+)</name>
        <dbReference type="ChEBI" id="CHEBI:18420"/>
    </ligand>
</feature>
<feature type="binding site" evidence="1">
    <location>
        <position position="275"/>
    </location>
    <ligand>
        <name>substrate</name>
    </ligand>
</feature>
<feature type="binding site" evidence="2">
    <location>
        <position position="275"/>
    </location>
    <ligand>
        <name>thiamine diphosphate</name>
        <dbReference type="ChEBI" id="CHEBI:58937"/>
    </ligand>
</feature>
<feature type="binding site" evidence="1">
    <location>
        <position position="369"/>
    </location>
    <ligand>
        <name>substrate</name>
    </ligand>
</feature>
<feature type="binding site" evidence="1">
    <location>
        <position position="396"/>
    </location>
    <ligand>
        <name>substrate</name>
    </ligand>
</feature>
<feature type="binding site" description="in homodimeric partner" evidence="2">
    <location>
        <position position="423"/>
    </location>
    <ligand>
        <name>thiamine diphosphate</name>
        <dbReference type="ChEBI" id="CHEBI:58937"/>
    </ligand>
</feature>
<feature type="binding site" description="in homodimeric partner" evidence="2">
    <location>
        <begin position="450"/>
        <end position="453"/>
    </location>
    <ligand>
        <name>thiamine diphosphate</name>
        <dbReference type="ChEBI" id="CHEBI:58937"/>
    </ligand>
</feature>
<feature type="binding site" evidence="1">
    <location>
        <position position="474"/>
    </location>
    <ligand>
        <name>substrate</name>
    </ligand>
</feature>
<feature type="binding site" evidence="1">
    <location>
        <position position="482"/>
    </location>
    <ligand>
        <name>substrate</name>
    </ligand>
</feature>
<feature type="binding site" evidence="1">
    <location>
        <position position="533"/>
    </location>
    <ligand>
        <name>substrate</name>
    </ligand>
</feature>
<feature type="site" description="Important for catalytic activity" evidence="1">
    <location>
        <position position="38"/>
    </location>
</feature>
<feature type="site" description="Important for catalytic activity" evidence="1">
    <location>
        <position position="275"/>
    </location>
</feature>
<feature type="helix" evidence="5">
    <location>
        <begin position="13"/>
        <end position="34"/>
    </location>
</feature>
<feature type="helix" evidence="5">
    <location>
        <begin position="40"/>
        <end position="55"/>
    </location>
</feature>
<feature type="strand" evidence="5">
    <location>
        <begin position="71"/>
        <end position="76"/>
    </location>
</feature>
<feature type="helix" evidence="5">
    <location>
        <begin position="77"/>
        <end position="79"/>
    </location>
</feature>
<feature type="helix" evidence="5">
    <location>
        <begin position="80"/>
        <end position="90"/>
    </location>
</feature>
<feature type="helix" evidence="5">
    <location>
        <begin position="97"/>
        <end position="100"/>
    </location>
</feature>
<feature type="turn" evidence="5">
    <location>
        <begin position="101"/>
        <end position="104"/>
    </location>
</feature>
<feature type="turn" evidence="5">
    <location>
        <begin position="116"/>
        <end position="118"/>
    </location>
</feature>
<feature type="helix" evidence="5">
    <location>
        <begin position="131"/>
        <end position="150"/>
    </location>
</feature>
<feature type="strand" evidence="5">
    <location>
        <begin position="162"/>
        <end position="166"/>
    </location>
</feature>
<feature type="helix" evidence="5">
    <location>
        <begin position="168"/>
        <end position="172"/>
    </location>
</feature>
<feature type="helix" evidence="5">
    <location>
        <begin position="174"/>
        <end position="185"/>
    </location>
</feature>
<feature type="strand" evidence="5">
    <location>
        <begin position="191"/>
        <end position="197"/>
    </location>
</feature>
<feature type="strand" evidence="5">
    <location>
        <begin position="199"/>
        <end position="201"/>
    </location>
</feature>
<feature type="helix" evidence="5">
    <location>
        <begin position="206"/>
        <end position="208"/>
    </location>
</feature>
<feature type="helix" evidence="5">
    <location>
        <begin position="214"/>
        <end position="220"/>
    </location>
</feature>
<feature type="strand" evidence="5">
    <location>
        <begin position="224"/>
        <end position="229"/>
    </location>
</feature>
<feature type="turn" evidence="5">
    <location>
        <begin position="231"/>
        <end position="233"/>
    </location>
</feature>
<feature type="helix" evidence="5">
    <location>
        <begin position="235"/>
        <end position="247"/>
    </location>
</feature>
<feature type="strand" evidence="5">
    <location>
        <begin position="253"/>
        <end position="258"/>
    </location>
</feature>
<feature type="turn" evidence="5">
    <location>
        <begin position="261"/>
        <end position="264"/>
    </location>
</feature>
<feature type="turn" evidence="5">
    <location>
        <begin position="266"/>
        <end position="270"/>
    </location>
</feature>
<feature type="helix" evidence="5">
    <location>
        <begin position="272"/>
        <end position="274"/>
    </location>
</feature>
<feature type="helix" evidence="5">
    <location>
        <begin position="281"/>
        <end position="291"/>
    </location>
</feature>
<feature type="helix" evidence="5">
    <location>
        <begin position="302"/>
        <end position="308"/>
    </location>
</feature>
<feature type="helix" evidence="5">
    <location>
        <begin position="311"/>
        <end position="332"/>
    </location>
</feature>
<feature type="helix" evidence="5">
    <location>
        <begin position="334"/>
        <end position="345"/>
    </location>
</feature>
<feature type="helix" evidence="5">
    <location>
        <begin position="352"/>
        <end position="355"/>
    </location>
</feature>
<feature type="helix" evidence="5">
    <location>
        <begin position="368"/>
        <end position="382"/>
    </location>
</feature>
<feature type="strand" evidence="5">
    <location>
        <begin position="386"/>
        <end position="392"/>
    </location>
</feature>
<feature type="helix" evidence="5">
    <location>
        <begin position="394"/>
        <end position="397"/>
    </location>
</feature>
<feature type="helix" evidence="5">
    <location>
        <begin position="423"/>
        <end position="434"/>
    </location>
</feature>
<feature type="strand" evidence="5">
    <location>
        <begin position="441"/>
        <end position="447"/>
    </location>
</feature>
<feature type="helix" evidence="5">
    <location>
        <begin position="448"/>
        <end position="450"/>
    </location>
</feature>
<feature type="helix" evidence="5">
    <location>
        <begin position="451"/>
        <end position="464"/>
    </location>
</feature>
<feature type="strand" evidence="5">
    <location>
        <begin position="469"/>
        <end position="473"/>
    </location>
</feature>
<feature type="helix" evidence="5">
    <location>
        <begin position="477"/>
        <end position="479"/>
    </location>
</feature>
<feature type="turn" evidence="5">
    <location>
        <begin position="484"/>
        <end position="486"/>
    </location>
</feature>
<feature type="helix" evidence="5">
    <location>
        <begin position="491"/>
        <end position="496"/>
    </location>
</feature>
<feature type="strand" evidence="5">
    <location>
        <begin position="497"/>
        <end position="500"/>
    </location>
</feature>
<feature type="strand" evidence="5">
    <location>
        <begin position="502"/>
        <end position="504"/>
    </location>
</feature>
<feature type="helix" evidence="5">
    <location>
        <begin position="509"/>
        <end position="521"/>
    </location>
</feature>
<feature type="strand" evidence="5">
    <location>
        <begin position="527"/>
        <end position="531"/>
    </location>
</feature>
<feature type="helix" evidence="5">
    <location>
        <begin position="544"/>
        <end position="547"/>
    </location>
</feature>
<feature type="strand" evidence="5">
    <location>
        <begin position="550"/>
        <end position="556"/>
    </location>
</feature>
<feature type="strand" evidence="5">
    <location>
        <begin position="564"/>
        <end position="569"/>
    </location>
</feature>
<feature type="helix" evidence="5">
    <location>
        <begin position="571"/>
        <end position="573"/>
    </location>
</feature>
<feature type="helix" evidence="5">
    <location>
        <begin position="574"/>
        <end position="586"/>
    </location>
</feature>
<feature type="strand" evidence="5">
    <location>
        <begin position="591"/>
        <end position="595"/>
    </location>
</feature>
<feature type="helix" evidence="5">
    <location>
        <begin position="599"/>
        <end position="603"/>
    </location>
</feature>
<feature type="helix" evidence="5">
    <location>
        <begin position="607"/>
        <end position="613"/>
    </location>
</feature>
<feature type="strand" evidence="5">
    <location>
        <begin position="621"/>
        <end position="624"/>
    </location>
</feature>
<feature type="turn" evidence="5">
    <location>
        <begin position="630"/>
        <end position="632"/>
    </location>
</feature>
<feature type="helix" evidence="5">
    <location>
        <begin position="633"/>
        <end position="636"/>
    </location>
</feature>
<feature type="strand" evidence="5">
    <location>
        <begin position="641"/>
        <end position="643"/>
    </location>
</feature>
<feature type="helix" evidence="5">
    <location>
        <begin position="654"/>
        <end position="661"/>
    </location>
</feature>
<feature type="helix" evidence="5">
    <location>
        <begin position="665"/>
        <end position="672"/>
    </location>
</feature>
<sequence length="675" mass="72993">GAVETLQGKAATGELLEKSVNTIRFLAIDAVEKANSGHPGLPMGCAPMGHVLYDEVMRYNPKNPYWFNRDRFVLSAGHGCMLQYALLHLAGYDSVKEEDLKQFRQWGSRTPGHPENFETPGVEVTTGPLGQGIANAVGLALAEKHLAARFNKPDSEIVDHYTYVILGDGCQMEGIANEACSLAGHWGLGKLIAFYDDNHISIDGDTEIAFTEDVSTRFEALGWHTIWVKNGNTGYDDIRAAIKEAKAVTDKPTLIKVTTTIGFGSPNKANSYSVHGSALGAKEVEATRQNLGWPYDTFFVPEDVKSHWSRHTPEGAALEADWNAKFAEYEKKYADDAATLKSIITGELPTGWVDALPKYTPESPGDATRNLSQQCLNALANVVPGLIGGSADLASSNMTLLKMFGDFQKDTAEERNVRFGVREHGMGAICNGIALHSPGFVPYCATFFVFTDYMRGAMRISALSEAGVIYVMTHDSIGLGEDGPTHQPIEHLVSFRAMPNILMLRPADGNETAGAYKVAVLNRKRPSILALSRQKLPHLPGTSIEGVEKGGYTISDNSTGNKPDLIVMGTGSELEIAAKAADELRKEGKTVRVVSFVSWELFDEQSDEYKESVLPAAVTARISIEAGSTLGWQKYVGAQGKAIGIDKFGASAPAGTIYKEYGITVESIIAAAKSF</sequence>
<accession>Q7SIC9</accession>
<proteinExistence type="evidence at protein level"/>
<reference evidence="3 4" key="1">
    <citation type="journal article" date="2003" name="Plant Physiol.">
        <title>Structure and properties of an engineered transketolase from maize.</title>
        <authorList>
            <person name="Gerhardt S."/>
            <person name="Echt S."/>
            <person name="Busch M."/>
            <person name="Freigang J."/>
            <person name="Auerbach G."/>
            <person name="Bader G."/>
            <person name="Martin W.F."/>
            <person name="Bacher A."/>
            <person name="Huber R."/>
            <person name="Fischer M."/>
        </authorList>
    </citation>
    <scope>NUCLEOTIDE SEQUENCE [MRNA]</scope>
    <scope>PROTEIN SEQUENCE OF 1-10</scope>
    <scope>X-RAY CRYSTALLOGRAPHY (2.3 ANGSTROMS) IN COMPLEX WITH COFACTOR</scope>
    <scope>FUNCTION</scope>
    <scope>CATALYTIC ACTIVITY</scope>
    <scope>SUBUNIT</scope>
    <scope>BIOPHYSICOCHEMICAL PROPERTIES</scope>
    <scope>MASS SPECTROMETRY</scope>
</reference>
<comment type="function">
    <text evidence="2">Catalyzes the reversible transfer of a two-carbon ketol group from fructose-6-phosphate or sedoheptulose-7-phosphate to glyceraldehyde-3-phosphate to yield xylulose-5-phosphate and erythrose-4-phosphate or ribose-5-phosphate, respectively.</text>
</comment>
<comment type="catalytic activity">
    <reaction evidence="2">
        <text>D-sedoheptulose 7-phosphate + D-glyceraldehyde 3-phosphate = aldehydo-D-ribose 5-phosphate + D-xylulose 5-phosphate</text>
        <dbReference type="Rhea" id="RHEA:10508"/>
        <dbReference type="ChEBI" id="CHEBI:57483"/>
        <dbReference type="ChEBI" id="CHEBI:57737"/>
        <dbReference type="ChEBI" id="CHEBI:58273"/>
        <dbReference type="ChEBI" id="CHEBI:59776"/>
        <dbReference type="EC" id="2.2.1.1"/>
    </reaction>
</comment>
<comment type="cofactor">
    <cofactor evidence="1">
        <name>Mg(2+)</name>
        <dbReference type="ChEBI" id="CHEBI:18420"/>
    </cofactor>
    <cofactor evidence="1">
        <name>Ca(2+)</name>
        <dbReference type="ChEBI" id="CHEBI:29108"/>
    </cofactor>
    <cofactor evidence="1">
        <name>Mn(2+)</name>
        <dbReference type="ChEBI" id="CHEBI:29035"/>
    </cofactor>
    <cofactor evidence="1">
        <name>Co(2+)</name>
        <dbReference type="ChEBI" id="CHEBI:48828"/>
    </cofactor>
    <text evidence="1">Binds 1 Mg(2+) ion per subunit. Can also utilize other divalent metal cations, such as Ca(2+), Mn(2+) and Co(2+).</text>
</comment>
<comment type="cofactor">
    <cofactor evidence="2">
        <name>thiamine diphosphate</name>
        <dbReference type="ChEBI" id="CHEBI:58937"/>
    </cofactor>
    <text evidence="2">Binds 1 thiamine pyrophosphate per subunit.</text>
</comment>
<comment type="biophysicochemical properties">
    <kinetics>
        <KM evidence="2">581 uM for ribulose-5-phosphate</KM>
        <KM evidence="2">403 uM for xyulose-5-phosphate</KM>
        <Vmax evidence="2">25.3 umol/min/mg enzyme with ribulose-5-phosphate as substrate</Vmax>
    </kinetics>
</comment>
<comment type="pathway">
    <text>Carbohydrate biosynthesis; Calvin cycle.</text>
</comment>
<comment type="subunit">
    <text evidence="2">Homodimer.</text>
</comment>
<comment type="subcellular location">
    <subcellularLocation>
        <location evidence="1">Plastid</location>
        <location evidence="1">Chloroplast thylakoid membrane</location>
    </subcellularLocation>
</comment>
<comment type="mass spectrometry" mass="72994.8" method="Electrospray" evidence="2"/>
<comment type="similarity">
    <text evidence="2">Belongs to the transketolase family.</text>
</comment>
<comment type="sequence caution" evidence="3">
    <conflict type="erroneous initiation">
        <sequence resource="EMBL-CDS" id="AAN65341"/>
    </conflict>
</comment>
<keyword id="KW-0002">3D-structure</keyword>
<keyword id="KW-0150">Chloroplast</keyword>
<keyword id="KW-0903">Direct protein sequencing</keyword>
<keyword id="KW-0460">Magnesium</keyword>
<keyword id="KW-0472">Membrane</keyword>
<keyword id="KW-0479">Metal-binding</keyword>
<keyword id="KW-0934">Plastid</keyword>
<keyword id="KW-1185">Reference proteome</keyword>
<keyword id="KW-0786">Thiamine pyrophosphate</keyword>
<keyword id="KW-0793">Thylakoid</keyword>
<keyword id="KW-0808">Transferase</keyword>
<name>TKTC_MAIZE</name>